<dbReference type="EC" id="5.1.1.3" evidence="1"/>
<dbReference type="EMBL" id="CP000887">
    <property type="protein sequence ID" value="ACD72638.1"/>
    <property type="molecule type" value="Genomic_DNA"/>
</dbReference>
<dbReference type="RefSeq" id="WP_002964323.1">
    <property type="nucleotide sequence ID" value="NC_010742.1"/>
</dbReference>
<dbReference type="SMR" id="B2S641"/>
<dbReference type="GeneID" id="97533561"/>
<dbReference type="KEGG" id="bmc:BAbS19_I11330"/>
<dbReference type="HOGENOM" id="CLU_052344_2_0_5"/>
<dbReference type="UniPathway" id="UPA00219"/>
<dbReference type="Proteomes" id="UP000002565">
    <property type="component" value="Chromosome 1"/>
</dbReference>
<dbReference type="GO" id="GO:0008881">
    <property type="term" value="F:glutamate racemase activity"/>
    <property type="evidence" value="ECO:0007669"/>
    <property type="project" value="UniProtKB-UniRule"/>
</dbReference>
<dbReference type="GO" id="GO:0071555">
    <property type="term" value="P:cell wall organization"/>
    <property type="evidence" value="ECO:0007669"/>
    <property type="project" value="UniProtKB-KW"/>
</dbReference>
<dbReference type="GO" id="GO:0009252">
    <property type="term" value="P:peptidoglycan biosynthetic process"/>
    <property type="evidence" value="ECO:0007669"/>
    <property type="project" value="UniProtKB-UniRule"/>
</dbReference>
<dbReference type="GO" id="GO:0008360">
    <property type="term" value="P:regulation of cell shape"/>
    <property type="evidence" value="ECO:0007669"/>
    <property type="project" value="UniProtKB-KW"/>
</dbReference>
<dbReference type="Gene3D" id="3.40.50.1860">
    <property type="match status" value="2"/>
</dbReference>
<dbReference type="HAMAP" id="MF_00258">
    <property type="entry name" value="Glu_racemase"/>
    <property type="match status" value="1"/>
</dbReference>
<dbReference type="InterPro" id="IPR015942">
    <property type="entry name" value="Asp/Glu/hydantoin_racemase"/>
</dbReference>
<dbReference type="InterPro" id="IPR001920">
    <property type="entry name" value="Asp/Glu_race"/>
</dbReference>
<dbReference type="InterPro" id="IPR018187">
    <property type="entry name" value="Asp/Glu_racemase_AS_1"/>
</dbReference>
<dbReference type="InterPro" id="IPR033134">
    <property type="entry name" value="Asp/Glu_racemase_AS_2"/>
</dbReference>
<dbReference type="InterPro" id="IPR004391">
    <property type="entry name" value="Glu_race"/>
</dbReference>
<dbReference type="NCBIfam" id="TIGR00067">
    <property type="entry name" value="glut_race"/>
    <property type="match status" value="1"/>
</dbReference>
<dbReference type="PANTHER" id="PTHR21198">
    <property type="entry name" value="GLUTAMATE RACEMASE"/>
    <property type="match status" value="1"/>
</dbReference>
<dbReference type="PANTHER" id="PTHR21198:SF2">
    <property type="entry name" value="GLUTAMATE RACEMASE"/>
    <property type="match status" value="1"/>
</dbReference>
<dbReference type="Pfam" id="PF01177">
    <property type="entry name" value="Asp_Glu_race"/>
    <property type="match status" value="1"/>
</dbReference>
<dbReference type="SUPFAM" id="SSF53681">
    <property type="entry name" value="Aspartate/glutamate racemase"/>
    <property type="match status" value="2"/>
</dbReference>
<dbReference type="PROSITE" id="PS00923">
    <property type="entry name" value="ASP_GLU_RACEMASE_1"/>
    <property type="match status" value="1"/>
</dbReference>
<dbReference type="PROSITE" id="PS00924">
    <property type="entry name" value="ASP_GLU_RACEMASE_2"/>
    <property type="match status" value="1"/>
</dbReference>
<comment type="function">
    <text evidence="1">Provides the (R)-glutamate required for cell wall biosynthesis.</text>
</comment>
<comment type="catalytic activity">
    <reaction evidence="1">
        <text>L-glutamate = D-glutamate</text>
        <dbReference type="Rhea" id="RHEA:12813"/>
        <dbReference type="ChEBI" id="CHEBI:29985"/>
        <dbReference type="ChEBI" id="CHEBI:29986"/>
        <dbReference type="EC" id="5.1.1.3"/>
    </reaction>
</comment>
<comment type="pathway">
    <text evidence="1">Cell wall biogenesis; peptidoglycan biosynthesis.</text>
</comment>
<comment type="similarity">
    <text evidence="1">Belongs to the aspartate/glutamate racemases family.</text>
</comment>
<name>MURI_BRUA1</name>
<evidence type="ECO:0000255" key="1">
    <source>
        <dbReference type="HAMAP-Rule" id="MF_00258"/>
    </source>
</evidence>
<proteinExistence type="inferred from homology"/>
<reference key="1">
    <citation type="journal article" date="2008" name="PLoS ONE">
        <title>Genome sequence of Brucella abortus vaccine strain S19 compared to virulent strains yields candidate virulence genes.</title>
        <authorList>
            <person name="Crasta O.R."/>
            <person name="Folkerts O."/>
            <person name="Fei Z."/>
            <person name="Mane S.P."/>
            <person name="Evans C."/>
            <person name="Martino-Catt S."/>
            <person name="Bricker B."/>
            <person name="Yu G."/>
            <person name="Du L."/>
            <person name="Sobral B.W."/>
        </authorList>
    </citation>
    <scope>NUCLEOTIDE SEQUENCE [LARGE SCALE GENOMIC DNA]</scope>
    <source>
        <strain>S19</strain>
    </source>
</reference>
<gene>
    <name evidence="1" type="primary">murI</name>
    <name type="ordered locus">BAbS19_I11330</name>
</gene>
<feature type="chain" id="PRO_1000114034" description="Glutamate racemase">
    <location>
        <begin position="1"/>
        <end position="277"/>
    </location>
</feature>
<feature type="active site" description="Proton donor/acceptor" evidence="1">
    <location>
        <position position="89"/>
    </location>
</feature>
<feature type="active site" description="Proton donor/acceptor" evidence="1">
    <location>
        <position position="204"/>
    </location>
</feature>
<feature type="binding site" evidence="1">
    <location>
        <begin position="25"/>
        <end position="26"/>
    </location>
    <ligand>
        <name>substrate</name>
    </ligand>
</feature>
<feature type="binding site" evidence="1">
    <location>
        <begin position="57"/>
        <end position="58"/>
    </location>
    <ligand>
        <name>substrate</name>
    </ligand>
</feature>
<feature type="binding site" evidence="1">
    <location>
        <begin position="90"/>
        <end position="91"/>
    </location>
    <ligand>
        <name>substrate</name>
    </ligand>
</feature>
<feature type="binding site" evidence="1">
    <location>
        <begin position="205"/>
        <end position="206"/>
    </location>
    <ligand>
        <name>substrate</name>
    </ligand>
</feature>
<organism>
    <name type="scientific">Brucella abortus (strain S19)</name>
    <dbReference type="NCBI Taxonomy" id="430066"/>
    <lineage>
        <taxon>Bacteria</taxon>
        <taxon>Pseudomonadati</taxon>
        <taxon>Pseudomonadota</taxon>
        <taxon>Alphaproteobacteria</taxon>
        <taxon>Hyphomicrobiales</taxon>
        <taxon>Brucellaceae</taxon>
        <taxon>Brucella/Ochrobactrum group</taxon>
        <taxon>Brucella</taxon>
    </lineage>
</organism>
<keyword id="KW-0133">Cell shape</keyword>
<keyword id="KW-0961">Cell wall biogenesis/degradation</keyword>
<keyword id="KW-0413">Isomerase</keyword>
<keyword id="KW-0573">Peptidoglycan synthesis</keyword>
<sequence>MKKAPAGSFPAKPTIAPERPILVFDSGIGGLTVLREARVVMPDRRFVYIADDAGFPYGNWEEEALKRRIIELFGEFIANYDPEIAVIACNTASTLVLEDLRRAYPSVPFVGTVPAIKPAAERTSSGLVSVLATPGTVKRAYTRDLIQSFASRCHVRLVGADGLAAIAEAHIRGESFDEALVMAQIAPCFIEKDGKRTDIVVLACTHYPFLVNVLRRLAPWPVDWLDPAEAIARRMKSLLPARSDDDEFHSQDDLAFFTSRKPDYAIRRLMQGFGLRF</sequence>
<protein>
    <recommendedName>
        <fullName evidence="1">Glutamate racemase</fullName>
        <ecNumber evidence="1">5.1.1.3</ecNumber>
    </recommendedName>
</protein>
<accession>B2S641</accession>